<dbReference type="EC" id="3.1.2.6" evidence="5"/>
<dbReference type="EMBL" id="AK290155">
    <property type="protein sequence ID" value="BAF82844.1"/>
    <property type="molecule type" value="mRNA"/>
</dbReference>
<dbReference type="EMBL" id="AK298174">
    <property type="protein sequence ID" value="BAG60445.1"/>
    <property type="molecule type" value="mRNA"/>
</dbReference>
<dbReference type="EMBL" id="AK299173">
    <property type="protein sequence ID" value="BAG61219.1"/>
    <property type="molecule type" value="mRNA"/>
</dbReference>
<dbReference type="EMBL" id="AE006639">
    <property type="protein sequence ID" value="AAK61294.1"/>
    <property type="molecule type" value="Genomic_DNA"/>
</dbReference>
<dbReference type="EMBL" id="AC012180">
    <property type="status" value="NOT_ANNOTATED_CDS"/>
    <property type="molecule type" value="Genomic_DNA"/>
</dbReference>
<dbReference type="EMBL" id="BC000840">
    <property type="protein sequence ID" value="AAH00840.1"/>
    <property type="status" value="ALT_INIT"/>
    <property type="molecule type" value="mRNA"/>
</dbReference>
<dbReference type="EMBL" id="BC002627">
    <property type="protein sequence ID" value="AAH02627.2"/>
    <property type="molecule type" value="mRNA"/>
</dbReference>
<dbReference type="EMBL" id="X90999">
    <property type="protein sequence ID" value="CAA62483.1"/>
    <property type="status" value="ALT_INIT"/>
    <property type="molecule type" value="mRNA"/>
</dbReference>
<dbReference type="CCDS" id="CCDS10447.2">
    <molecule id="Q16775-1"/>
</dbReference>
<dbReference type="CCDS" id="CCDS32366.1">
    <molecule id="Q16775-2"/>
</dbReference>
<dbReference type="CCDS" id="CCDS66900.1">
    <molecule id="Q16775-3"/>
</dbReference>
<dbReference type="RefSeq" id="NP_001035517.1">
    <molecule id="Q16775-2"/>
    <property type="nucleotide sequence ID" value="NM_001040427.2"/>
</dbReference>
<dbReference type="RefSeq" id="NP_001273178.1">
    <molecule id="Q16775-3"/>
    <property type="nucleotide sequence ID" value="NM_001286249.2"/>
</dbReference>
<dbReference type="RefSeq" id="NP_005317.2">
    <molecule id="Q16775-1"/>
    <property type="nucleotide sequence ID" value="NM_005326.6"/>
</dbReference>
<dbReference type="RefSeq" id="XP_011520772.1">
    <molecule id="Q16775-3"/>
    <property type="nucleotide sequence ID" value="XM_011522470.4"/>
</dbReference>
<dbReference type="RefSeq" id="XP_054236174.1">
    <molecule id="Q16775-3"/>
    <property type="nucleotide sequence ID" value="XM_054380199.1"/>
</dbReference>
<dbReference type="PDB" id="1QH3">
    <property type="method" value="X-ray"/>
    <property type="resolution" value="1.90 A"/>
    <property type="chains" value="A/B=49-308"/>
</dbReference>
<dbReference type="PDB" id="1QH5">
    <property type="method" value="X-ray"/>
    <property type="resolution" value="1.45 A"/>
    <property type="chains" value="A/B=49-308"/>
</dbReference>
<dbReference type="PDBsum" id="1QH3"/>
<dbReference type="PDBsum" id="1QH5"/>
<dbReference type="SMR" id="Q16775"/>
<dbReference type="BioGRID" id="109279">
    <property type="interactions" value="91"/>
</dbReference>
<dbReference type="FunCoup" id="Q16775">
    <property type="interactions" value="1814"/>
</dbReference>
<dbReference type="IntAct" id="Q16775">
    <property type="interactions" value="38"/>
</dbReference>
<dbReference type="MINT" id="Q16775"/>
<dbReference type="STRING" id="9606.ENSP00000380514"/>
<dbReference type="BindingDB" id="Q16775"/>
<dbReference type="ChEMBL" id="CHEMBL2261"/>
<dbReference type="DrugBank" id="DB00143">
    <property type="generic name" value="Glutathione"/>
</dbReference>
<dbReference type="DrugBank" id="DB03889">
    <property type="generic name" value="S-(N-hydroxy-N-bromophenylcarbamoyl)glutathione"/>
</dbReference>
<dbReference type="GlyGen" id="Q16775">
    <property type="glycosylation" value="1 site, 1 O-linked glycan (1 site)"/>
</dbReference>
<dbReference type="iPTMnet" id="Q16775"/>
<dbReference type="MetOSite" id="Q16775"/>
<dbReference type="PhosphoSitePlus" id="Q16775"/>
<dbReference type="SwissPalm" id="Q16775"/>
<dbReference type="BioMuta" id="HAGH"/>
<dbReference type="DMDM" id="257051015"/>
<dbReference type="jPOST" id="Q16775"/>
<dbReference type="MassIVE" id="Q16775"/>
<dbReference type="PaxDb" id="9606-ENSP00000380514"/>
<dbReference type="PeptideAtlas" id="Q16775"/>
<dbReference type="ProteomicsDB" id="17109"/>
<dbReference type="ProteomicsDB" id="61064">
    <molecule id="Q16775-1"/>
</dbReference>
<dbReference type="ProteomicsDB" id="61065">
    <molecule id="Q16775-2"/>
</dbReference>
<dbReference type="Pumba" id="Q16775"/>
<dbReference type="Antibodypedia" id="23273">
    <property type="antibodies" value="230 antibodies from 32 providers"/>
</dbReference>
<dbReference type="DNASU" id="3029"/>
<dbReference type="Ensembl" id="ENST00000397353.6">
    <molecule id="Q16775-2"/>
    <property type="protein sequence ID" value="ENSP00000380511.2"/>
    <property type="gene ID" value="ENSG00000063854.13"/>
</dbReference>
<dbReference type="Ensembl" id="ENST00000397356.8">
    <molecule id="Q16775-1"/>
    <property type="protein sequence ID" value="ENSP00000380514.3"/>
    <property type="gene ID" value="ENSG00000063854.13"/>
</dbReference>
<dbReference type="Ensembl" id="ENST00000455446.6">
    <molecule id="Q16775-3"/>
    <property type="protein sequence ID" value="ENSP00000406552.2"/>
    <property type="gene ID" value="ENSG00000063854.13"/>
</dbReference>
<dbReference type="GeneID" id="3029"/>
<dbReference type="KEGG" id="hsa:3029"/>
<dbReference type="MANE-Select" id="ENST00000397356.8">
    <property type="protein sequence ID" value="ENSP00000380514.3"/>
    <property type="RefSeq nucleotide sequence ID" value="NM_005326.6"/>
    <property type="RefSeq protein sequence ID" value="NP_005317.2"/>
</dbReference>
<dbReference type="UCSC" id="uc002cmz.4">
    <molecule id="Q16775-1"/>
    <property type="organism name" value="human"/>
</dbReference>
<dbReference type="AGR" id="HGNC:4805"/>
<dbReference type="CTD" id="3029"/>
<dbReference type="DisGeNET" id="3029"/>
<dbReference type="GeneCards" id="HAGH"/>
<dbReference type="HGNC" id="HGNC:4805">
    <property type="gene designation" value="HAGH"/>
</dbReference>
<dbReference type="HPA" id="ENSG00000063854">
    <property type="expression patterns" value="Low tissue specificity"/>
</dbReference>
<dbReference type="MalaCards" id="HAGH"/>
<dbReference type="MIM" id="138760">
    <property type="type" value="gene+phenotype"/>
</dbReference>
<dbReference type="neXtProt" id="NX_Q16775"/>
<dbReference type="OpenTargets" id="ENSG00000063854"/>
<dbReference type="PharmGKB" id="PA29179"/>
<dbReference type="VEuPathDB" id="HostDB:ENSG00000063854"/>
<dbReference type="eggNOG" id="KOG0813">
    <property type="taxonomic scope" value="Eukaryota"/>
</dbReference>
<dbReference type="GeneTree" id="ENSGT00940000159176"/>
<dbReference type="HOGENOM" id="CLU_1175103_0_0_1"/>
<dbReference type="InParanoid" id="Q16775"/>
<dbReference type="OMA" id="NYIWLLQ"/>
<dbReference type="OrthoDB" id="515692at2759"/>
<dbReference type="PAN-GO" id="Q16775">
    <property type="GO annotations" value="3 GO annotations based on evolutionary models"/>
</dbReference>
<dbReference type="PhylomeDB" id="Q16775"/>
<dbReference type="TreeFam" id="TF105273"/>
<dbReference type="BRENDA" id="3.1.2.6">
    <property type="organism ID" value="2681"/>
</dbReference>
<dbReference type="PathwayCommons" id="Q16775"/>
<dbReference type="Reactome" id="R-HSA-70268">
    <molecule id="Q16775-2"/>
    <property type="pathway name" value="Pyruvate metabolism"/>
</dbReference>
<dbReference type="SABIO-RK" id="Q16775"/>
<dbReference type="SignaLink" id="Q16775"/>
<dbReference type="UniPathway" id="UPA00619">
    <property type="reaction ID" value="UER00676"/>
</dbReference>
<dbReference type="BioGRID-ORCS" id="3029">
    <property type="hits" value="27 hits in 1162 CRISPR screens"/>
</dbReference>
<dbReference type="CD-CODE" id="232F8A39">
    <property type="entry name" value="P-body"/>
</dbReference>
<dbReference type="ChiTaRS" id="HAGH">
    <property type="organism name" value="human"/>
</dbReference>
<dbReference type="EvolutionaryTrace" id="Q16775"/>
<dbReference type="GeneWiki" id="HAGH"/>
<dbReference type="GenomeRNAi" id="3029"/>
<dbReference type="Pharos" id="Q16775">
    <property type="development level" value="Tbio"/>
</dbReference>
<dbReference type="PRO" id="PR:Q16775"/>
<dbReference type="Proteomes" id="UP000005640">
    <property type="component" value="Chromosome 16"/>
</dbReference>
<dbReference type="RNAct" id="Q16775">
    <property type="molecule type" value="protein"/>
</dbReference>
<dbReference type="Bgee" id="ENSG00000063854">
    <property type="expression patterns" value="Expressed in apex of heart and 207 other cell types or tissues"/>
</dbReference>
<dbReference type="ExpressionAtlas" id="Q16775">
    <property type="expression patterns" value="baseline and differential"/>
</dbReference>
<dbReference type="GO" id="GO:0005737">
    <property type="term" value="C:cytoplasm"/>
    <property type="evidence" value="ECO:0000314"/>
    <property type="project" value="UniProtKB"/>
</dbReference>
<dbReference type="GO" id="GO:0005829">
    <property type="term" value="C:cytosol"/>
    <property type="evidence" value="ECO:0000304"/>
    <property type="project" value="Reactome"/>
</dbReference>
<dbReference type="GO" id="GO:0005759">
    <property type="term" value="C:mitochondrial matrix"/>
    <property type="evidence" value="ECO:0000314"/>
    <property type="project" value="UniProtKB"/>
</dbReference>
<dbReference type="GO" id="GO:0005739">
    <property type="term" value="C:mitochondrion"/>
    <property type="evidence" value="ECO:0006056"/>
    <property type="project" value="FlyBase"/>
</dbReference>
<dbReference type="GO" id="GO:0004416">
    <property type="term" value="F:hydroxyacylglutathione hydrolase activity"/>
    <property type="evidence" value="ECO:0000314"/>
    <property type="project" value="UniProtKB"/>
</dbReference>
<dbReference type="GO" id="GO:0046872">
    <property type="term" value="F:metal ion binding"/>
    <property type="evidence" value="ECO:0007669"/>
    <property type="project" value="UniProtKB-KW"/>
</dbReference>
<dbReference type="GO" id="GO:0006750">
    <property type="term" value="P:glutathione biosynthetic process"/>
    <property type="evidence" value="ECO:0000314"/>
    <property type="project" value="UniProtKB"/>
</dbReference>
<dbReference type="GO" id="GO:0006749">
    <property type="term" value="P:glutathione metabolic process"/>
    <property type="evidence" value="ECO:0000318"/>
    <property type="project" value="GO_Central"/>
</dbReference>
<dbReference type="GO" id="GO:0019243">
    <property type="term" value="P:methylglyoxal catabolic process to D-lactate via S-lactoyl-glutathione"/>
    <property type="evidence" value="ECO:0007669"/>
    <property type="project" value="InterPro"/>
</dbReference>
<dbReference type="CDD" id="cd07723">
    <property type="entry name" value="hydroxyacylglutathione_hydrolase_MBL-fold"/>
    <property type="match status" value="1"/>
</dbReference>
<dbReference type="FunFam" id="3.60.15.10:FF:000019">
    <property type="entry name" value="Hydroxyacylglutathione hydrolase, mitochondrial"/>
    <property type="match status" value="1"/>
</dbReference>
<dbReference type="Gene3D" id="3.60.15.10">
    <property type="entry name" value="Ribonuclease Z/Hydroxyacylglutathione hydrolase-like"/>
    <property type="match status" value="1"/>
</dbReference>
<dbReference type="HAMAP" id="MF_01374">
    <property type="entry name" value="Glyoxalase_2"/>
    <property type="match status" value="1"/>
</dbReference>
<dbReference type="InterPro" id="IPR035680">
    <property type="entry name" value="Clx_II_MBL"/>
</dbReference>
<dbReference type="InterPro" id="IPR032282">
    <property type="entry name" value="HAGH_C"/>
</dbReference>
<dbReference type="InterPro" id="IPR017782">
    <property type="entry name" value="Hydroxyacylglutathione_Hdrlase"/>
</dbReference>
<dbReference type="InterPro" id="IPR001279">
    <property type="entry name" value="Metallo-B-lactamas"/>
</dbReference>
<dbReference type="InterPro" id="IPR036866">
    <property type="entry name" value="RibonucZ/Hydroxyglut_hydro"/>
</dbReference>
<dbReference type="NCBIfam" id="TIGR03413">
    <property type="entry name" value="GSH_gloB"/>
    <property type="match status" value="1"/>
</dbReference>
<dbReference type="PANTHER" id="PTHR11935">
    <property type="entry name" value="BETA LACTAMASE DOMAIN"/>
    <property type="match status" value="1"/>
</dbReference>
<dbReference type="PANTHER" id="PTHR11935:SF80">
    <property type="entry name" value="HYDROXYACYLGLUTATHIONE HYDROLASE, MITOCHONDRIAL"/>
    <property type="match status" value="1"/>
</dbReference>
<dbReference type="Pfam" id="PF16123">
    <property type="entry name" value="HAGH_C"/>
    <property type="match status" value="1"/>
</dbReference>
<dbReference type="Pfam" id="PF00753">
    <property type="entry name" value="Lactamase_B"/>
    <property type="match status" value="1"/>
</dbReference>
<dbReference type="PIRSF" id="PIRSF005457">
    <property type="entry name" value="Glx"/>
    <property type="match status" value="1"/>
</dbReference>
<dbReference type="SMART" id="SM00849">
    <property type="entry name" value="Lactamase_B"/>
    <property type="match status" value="1"/>
</dbReference>
<dbReference type="SUPFAM" id="SSF56281">
    <property type="entry name" value="Metallo-hydrolase/oxidoreductase"/>
    <property type="match status" value="1"/>
</dbReference>
<accession>Q16775</accession>
<accession>A8K290</accession>
<accession>B4DP33</accession>
<accession>B4DRA7</accession>
<accession>E7EN93</accession>
<reference key="1">
    <citation type="journal article" date="2004" name="Nat. Genet.">
        <title>Complete sequencing and characterization of 21,243 full-length human cDNAs.</title>
        <authorList>
            <person name="Ota T."/>
            <person name="Suzuki Y."/>
            <person name="Nishikawa T."/>
            <person name="Otsuki T."/>
            <person name="Sugiyama T."/>
            <person name="Irie R."/>
            <person name="Wakamatsu A."/>
            <person name="Hayashi K."/>
            <person name="Sato H."/>
            <person name="Nagai K."/>
            <person name="Kimura K."/>
            <person name="Makita H."/>
            <person name="Sekine M."/>
            <person name="Obayashi M."/>
            <person name="Nishi T."/>
            <person name="Shibahara T."/>
            <person name="Tanaka T."/>
            <person name="Ishii S."/>
            <person name="Yamamoto J."/>
            <person name="Saito K."/>
            <person name="Kawai Y."/>
            <person name="Isono Y."/>
            <person name="Nakamura Y."/>
            <person name="Nagahari K."/>
            <person name="Murakami K."/>
            <person name="Yasuda T."/>
            <person name="Iwayanagi T."/>
            <person name="Wagatsuma M."/>
            <person name="Shiratori A."/>
            <person name="Sudo H."/>
            <person name="Hosoiri T."/>
            <person name="Kaku Y."/>
            <person name="Kodaira H."/>
            <person name="Kondo H."/>
            <person name="Sugawara M."/>
            <person name="Takahashi M."/>
            <person name="Kanda K."/>
            <person name="Yokoi T."/>
            <person name="Furuya T."/>
            <person name="Kikkawa E."/>
            <person name="Omura Y."/>
            <person name="Abe K."/>
            <person name="Kamihara K."/>
            <person name="Katsuta N."/>
            <person name="Sato K."/>
            <person name="Tanikawa M."/>
            <person name="Yamazaki M."/>
            <person name="Ninomiya K."/>
            <person name="Ishibashi T."/>
            <person name="Yamashita H."/>
            <person name="Murakawa K."/>
            <person name="Fujimori K."/>
            <person name="Tanai H."/>
            <person name="Kimata M."/>
            <person name="Watanabe M."/>
            <person name="Hiraoka S."/>
            <person name="Chiba Y."/>
            <person name="Ishida S."/>
            <person name="Ono Y."/>
            <person name="Takiguchi S."/>
            <person name="Watanabe S."/>
            <person name="Yosida M."/>
            <person name="Hotuta T."/>
            <person name="Kusano J."/>
            <person name="Kanehori K."/>
            <person name="Takahashi-Fujii A."/>
            <person name="Hara H."/>
            <person name="Tanase T.-O."/>
            <person name="Nomura Y."/>
            <person name="Togiya S."/>
            <person name="Komai F."/>
            <person name="Hara R."/>
            <person name="Takeuchi K."/>
            <person name="Arita M."/>
            <person name="Imose N."/>
            <person name="Musashino K."/>
            <person name="Yuuki H."/>
            <person name="Oshima A."/>
            <person name="Sasaki N."/>
            <person name="Aotsuka S."/>
            <person name="Yoshikawa Y."/>
            <person name="Matsunawa H."/>
            <person name="Ichihara T."/>
            <person name="Shiohata N."/>
            <person name="Sano S."/>
            <person name="Moriya S."/>
            <person name="Momiyama H."/>
            <person name="Satoh N."/>
            <person name="Takami S."/>
            <person name="Terashima Y."/>
            <person name="Suzuki O."/>
            <person name="Nakagawa S."/>
            <person name="Senoh A."/>
            <person name="Mizoguchi H."/>
            <person name="Goto Y."/>
            <person name="Shimizu F."/>
            <person name="Wakebe H."/>
            <person name="Hishigaki H."/>
            <person name="Watanabe T."/>
            <person name="Sugiyama A."/>
            <person name="Takemoto M."/>
            <person name="Kawakami B."/>
            <person name="Yamazaki M."/>
            <person name="Watanabe K."/>
            <person name="Kumagai A."/>
            <person name="Itakura S."/>
            <person name="Fukuzumi Y."/>
            <person name="Fujimori Y."/>
            <person name="Komiyama M."/>
            <person name="Tashiro H."/>
            <person name="Tanigami A."/>
            <person name="Fujiwara T."/>
            <person name="Ono T."/>
            <person name="Yamada K."/>
            <person name="Fujii Y."/>
            <person name="Ozaki K."/>
            <person name="Hirao M."/>
            <person name="Ohmori Y."/>
            <person name="Kawabata A."/>
            <person name="Hikiji T."/>
            <person name="Kobatake N."/>
            <person name="Inagaki H."/>
            <person name="Ikema Y."/>
            <person name="Okamoto S."/>
            <person name="Okitani R."/>
            <person name="Kawakami T."/>
            <person name="Noguchi S."/>
            <person name="Itoh T."/>
            <person name="Shigeta K."/>
            <person name="Senba T."/>
            <person name="Matsumura K."/>
            <person name="Nakajima Y."/>
            <person name="Mizuno T."/>
            <person name="Morinaga M."/>
            <person name="Sasaki M."/>
            <person name="Togashi T."/>
            <person name="Oyama M."/>
            <person name="Hata H."/>
            <person name="Watanabe M."/>
            <person name="Komatsu T."/>
            <person name="Mizushima-Sugano J."/>
            <person name="Satoh T."/>
            <person name="Shirai Y."/>
            <person name="Takahashi Y."/>
            <person name="Nakagawa K."/>
            <person name="Okumura K."/>
            <person name="Nagase T."/>
            <person name="Nomura N."/>
            <person name="Kikuchi H."/>
            <person name="Masuho Y."/>
            <person name="Yamashita R."/>
            <person name="Nakai K."/>
            <person name="Yada T."/>
            <person name="Nakamura Y."/>
            <person name="Ohara O."/>
            <person name="Isogai T."/>
            <person name="Sugano S."/>
        </authorList>
    </citation>
    <scope>NUCLEOTIDE SEQUENCE [LARGE SCALE MRNA] (ISOFORMS 1; 2 AND 3)</scope>
    <source>
        <tissue>Thalamus</tissue>
    </source>
</reference>
<reference key="2">
    <citation type="journal article" date="2001" name="Hum. Mol. Genet.">
        <title>Sequence, structure and pathology of the fully annotated terminal 2 Mb of the short arm of human chromosome 16.</title>
        <authorList>
            <person name="Daniels R.J."/>
            <person name="Peden J.F."/>
            <person name="Lloyd C."/>
            <person name="Horsley S.W."/>
            <person name="Clark K."/>
            <person name="Tufarelli C."/>
            <person name="Kearney L."/>
            <person name="Buckle V.J."/>
            <person name="Doggett N.A."/>
            <person name="Flint J."/>
            <person name="Higgs D.R."/>
        </authorList>
    </citation>
    <scope>NUCLEOTIDE SEQUENCE [LARGE SCALE GENOMIC DNA]</scope>
</reference>
<reference key="3">
    <citation type="journal article" date="2004" name="Nature">
        <title>The sequence and analysis of duplication-rich human chromosome 16.</title>
        <authorList>
            <person name="Martin J."/>
            <person name="Han C."/>
            <person name="Gordon L.A."/>
            <person name="Terry A."/>
            <person name="Prabhakar S."/>
            <person name="She X."/>
            <person name="Xie G."/>
            <person name="Hellsten U."/>
            <person name="Chan Y.M."/>
            <person name="Altherr M."/>
            <person name="Couronne O."/>
            <person name="Aerts A."/>
            <person name="Bajorek E."/>
            <person name="Black S."/>
            <person name="Blumer H."/>
            <person name="Branscomb E."/>
            <person name="Brown N.C."/>
            <person name="Bruno W.J."/>
            <person name="Buckingham J.M."/>
            <person name="Callen D.F."/>
            <person name="Campbell C.S."/>
            <person name="Campbell M.L."/>
            <person name="Campbell E.W."/>
            <person name="Caoile C."/>
            <person name="Challacombe J.F."/>
            <person name="Chasteen L.A."/>
            <person name="Chertkov O."/>
            <person name="Chi H.C."/>
            <person name="Christensen M."/>
            <person name="Clark L.M."/>
            <person name="Cohn J.D."/>
            <person name="Denys M."/>
            <person name="Detter J.C."/>
            <person name="Dickson M."/>
            <person name="Dimitrijevic-Bussod M."/>
            <person name="Escobar J."/>
            <person name="Fawcett J.J."/>
            <person name="Flowers D."/>
            <person name="Fotopulos D."/>
            <person name="Glavina T."/>
            <person name="Gomez M."/>
            <person name="Gonzales E."/>
            <person name="Goodstein D."/>
            <person name="Goodwin L.A."/>
            <person name="Grady D.L."/>
            <person name="Grigoriev I."/>
            <person name="Groza M."/>
            <person name="Hammon N."/>
            <person name="Hawkins T."/>
            <person name="Haydu L."/>
            <person name="Hildebrand C.E."/>
            <person name="Huang W."/>
            <person name="Israni S."/>
            <person name="Jett J."/>
            <person name="Jewett P.B."/>
            <person name="Kadner K."/>
            <person name="Kimball H."/>
            <person name="Kobayashi A."/>
            <person name="Krawczyk M.-C."/>
            <person name="Leyba T."/>
            <person name="Longmire J.L."/>
            <person name="Lopez F."/>
            <person name="Lou Y."/>
            <person name="Lowry S."/>
            <person name="Ludeman T."/>
            <person name="Manohar C.F."/>
            <person name="Mark G.A."/>
            <person name="McMurray K.L."/>
            <person name="Meincke L.J."/>
            <person name="Morgan J."/>
            <person name="Moyzis R.K."/>
            <person name="Mundt M.O."/>
            <person name="Munk A.C."/>
            <person name="Nandkeshwar R.D."/>
            <person name="Pitluck S."/>
            <person name="Pollard M."/>
            <person name="Predki P."/>
            <person name="Parson-Quintana B."/>
            <person name="Ramirez L."/>
            <person name="Rash S."/>
            <person name="Retterer J."/>
            <person name="Ricke D.O."/>
            <person name="Robinson D.L."/>
            <person name="Rodriguez A."/>
            <person name="Salamov A."/>
            <person name="Saunders E.H."/>
            <person name="Scott D."/>
            <person name="Shough T."/>
            <person name="Stallings R.L."/>
            <person name="Stalvey M."/>
            <person name="Sutherland R.D."/>
            <person name="Tapia R."/>
            <person name="Tesmer J.G."/>
            <person name="Thayer N."/>
            <person name="Thompson L.S."/>
            <person name="Tice H."/>
            <person name="Torney D.C."/>
            <person name="Tran-Gyamfi M."/>
            <person name="Tsai M."/>
            <person name="Ulanovsky L.E."/>
            <person name="Ustaszewska A."/>
            <person name="Vo N."/>
            <person name="White P.S."/>
            <person name="Williams A.L."/>
            <person name="Wills P.L."/>
            <person name="Wu J.-R."/>
            <person name="Wu K."/>
            <person name="Yang J."/>
            <person name="DeJong P."/>
            <person name="Bruce D."/>
            <person name="Doggett N.A."/>
            <person name="Deaven L."/>
            <person name="Schmutz J."/>
            <person name="Grimwood J."/>
            <person name="Richardson P."/>
            <person name="Rokhsar D.S."/>
            <person name="Eichler E.E."/>
            <person name="Gilna P."/>
            <person name="Lucas S.M."/>
            <person name="Myers R.M."/>
            <person name="Rubin E.M."/>
            <person name="Pennacchio L.A."/>
        </authorList>
    </citation>
    <scope>NUCLEOTIDE SEQUENCE [LARGE SCALE GENOMIC DNA]</scope>
</reference>
<reference key="4">
    <citation type="journal article" date="2004" name="Genome Res.">
        <title>The status, quality, and expansion of the NIH full-length cDNA project: the Mammalian Gene Collection (MGC).</title>
        <authorList>
            <consortium name="The MGC Project Team"/>
        </authorList>
    </citation>
    <scope>NUCLEOTIDE SEQUENCE [LARGE SCALE MRNA] (ISOFORM 1)</scope>
    <source>
        <tissue>Cervix</tissue>
        <tissue>Uterus</tissue>
    </source>
</reference>
<reference key="5">
    <citation type="journal article" date="1996" name="J. Biol. Chem.">
        <title>Molecular cloning, heterologous expression, and characterization of human glyoxalase II.</title>
        <authorList>
            <person name="Ridderstroem M."/>
            <person name="Saccucci F."/>
            <person name="Hellman U."/>
            <person name="Bergman T."/>
            <person name="Principato G."/>
            <person name="Mannervik B."/>
        </authorList>
    </citation>
    <scope>NUCLEOTIDE SEQUENCE [MRNA] OF 37-308 (ISOFORMS 1/2)</scope>
    <scope>PROTEIN SEQUENCE</scope>
    <scope>FUNCTION</scope>
    <scope>CATALYTIC ACTIVITY</scope>
    <scope>BIOPHYSICOCHEMICAL PROPERTIES</scope>
    <source>
        <tissue>Liver</tissue>
    </source>
</reference>
<reference key="6">
    <citation type="journal article" date="2004" name="J. Biol. Chem.">
        <title>The human hydroxyacylglutathione hydrolase (HAGH) gene encodes both cytosolic and mitochondrial forms of glyoxalase II.</title>
        <authorList>
            <person name="Cordell P.A."/>
            <person name="Futers T.S."/>
            <person name="Grant P.J."/>
            <person name="Pease R.J."/>
        </authorList>
    </citation>
    <scope>SUBCELLULAR LOCATION</scope>
    <scope>ALTERNATIVE INITIATION</scope>
    <scope>ALTERNATIVE SPLICING (ISOFORMS 1 AND 2)</scope>
    <scope>TISSUE SPECIFICITY</scope>
</reference>
<reference key="7">
    <citation type="journal article" date="2009" name="Science">
        <title>Lysine acetylation targets protein complexes and co-regulates major cellular functions.</title>
        <authorList>
            <person name="Choudhary C."/>
            <person name="Kumar C."/>
            <person name="Gnad F."/>
            <person name="Nielsen M.L."/>
            <person name="Rehman M."/>
            <person name="Walther T.C."/>
            <person name="Olsen J.V."/>
            <person name="Mann M."/>
        </authorList>
    </citation>
    <scope>ACETYLATION [LARGE SCALE ANALYSIS] AT LYS-229</scope>
    <scope>IDENTIFICATION BY MASS SPECTROMETRY [LARGE SCALE ANALYSIS]</scope>
</reference>
<reference key="8">
    <citation type="journal article" date="2011" name="BMC Syst. Biol.">
        <title>Initial characterization of the human central proteome.</title>
        <authorList>
            <person name="Burkard T.R."/>
            <person name="Planyavsky M."/>
            <person name="Kaupe I."/>
            <person name="Breitwieser F.P."/>
            <person name="Buerckstuemmer T."/>
            <person name="Bennett K.L."/>
            <person name="Superti-Furga G."/>
            <person name="Colinge J."/>
        </authorList>
    </citation>
    <scope>IDENTIFICATION BY MASS SPECTROMETRY [LARGE SCALE ANALYSIS]</scope>
</reference>
<reference key="9">
    <citation type="journal article" date="2014" name="J. Proteomics">
        <title>An enzyme assisted RP-RPLC approach for in-depth analysis of human liver phosphoproteome.</title>
        <authorList>
            <person name="Bian Y."/>
            <person name="Song C."/>
            <person name="Cheng K."/>
            <person name="Dong M."/>
            <person name="Wang F."/>
            <person name="Huang J."/>
            <person name="Sun D."/>
            <person name="Wang L."/>
            <person name="Ye M."/>
            <person name="Zou H."/>
        </authorList>
    </citation>
    <scope>IDENTIFICATION BY MASS SPECTROMETRY [LARGE SCALE ANALYSIS]</scope>
    <source>
        <tissue>Liver</tissue>
    </source>
</reference>
<reference key="10">
    <citation type="journal article" date="1999" name="Structure">
        <title>Crystal structure of human glyoxalase II and its complex with a glutathione thiolester substrate analogue.</title>
        <authorList>
            <person name="Cameron A.D."/>
            <person name="Ridderstroem M."/>
            <person name="Olin B."/>
            <person name="Mannervik B."/>
        </authorList>
    </citation>
    <scope>X-RAY CRYSTALLOGRAPHY (1.90 ANGSTROMS) OF 49-308 IN COMPLEX WITH SUBSTRATE ANALOGS AND ZINC IONS</scope>
    <scope>COFACTOR</scope>
    <scope>SUBUNIT</scope>
    <scope>ZINC-BINDING SITES</scope>
    <source>
        <tissue>Liver</tissue>
    </source>
</reference>
<name>GLO2_HUMAN</name>
<gene>
    <name type="primary">HAGH</name>
    <name type="synonym">GLO2</name>
    <name type="synonym">HAGH1</name>
</gene>
<organism>
    <name type="scientific">Homo sapiens</name>
    <name type="common">Human</name>
    <dbReference type="NCBI Taxonomy" id="9606"/>
    <lineage>
        <taxon>Eukaryota</taxon>
        <taxon>Metazoa</taxon>
        <taxon>Chordata</taxon>
        <taxon>Craniata</taxon>
        <taxon>Vertebrata</taxon>
        <taxon>Euteleostomi</taxon>
        <taxon>Mammalia</taxon>
        <taxon>Eutheria</taxon>
        <taxon>Euarchontoglires</taxon>
        <taxon>Primates</taxon>
        <taxon>Haplorrhini</taxon>
        <taxon>Catarrhini</taxon>
        <taxon>Hominidae</taxon>
        <taxon>Homo</taxon>
    </lineage>
</organism>
<feature type="transit peptide" description="Mitochondrion" evidence="2">
    <location>
        <begin position="1"/>
        <end position="13"/>
    </location>
</feature>
<feature type="chain" id="PRO_0000192342" description="Hydroxyacylglutathione hydrolase, mitochondrial">
    <location>
        <begin position="14"/>
        <end position="308"/>
    </location>
</feature>
<feature type="binding site" evidence="3">
    <location>
        <position position="102"/>
    </location>
    <ligand>
        <name>Zn(2+)</name>
        <dbReference type="ChEBI" id="CHEBI:29105"/>
        <label>1</label>
    </ligand>
</feature>
<feature type="binding site" evidence="3">
    <location>
        <position position="104"/>
    </location>
    <ligand>
        <name>Zn(2+)</name>
        <dbReference type="ChEBI" id="CHEBI:29105"/>
        <label>1</label>
    </ligand>
</feature>
<feature type="binding site" evidence="3">
    <location>
        <position position="106"/>
    </location>
    <ligand>
        <name>Zn(2+)</name>
        <dbReference type="ChEBI" id="CHEBI:29105"/>
        <label>2</label>
    </ligand>
</feature>
<feature type="binding site" evidence="3">
    <location>
        <position position="107"/>
    </location>
    <ligand>
        <name>Zn(2+)</name>
        <dbReference type="ChEBI" id="CHEBI:29105"/>
        <label>2</label>
    </ligand>
</feature>
<feature type="binding site" evidence="3">
    <location>
        <position position="158"/>
    </location>
    <ligand>
        <name>Zn(2+)</name>
        <dbReference type="ChEBI" id="CHEBI:29105"/>
        <label>1</label>
    </ligand>
</feature>
<feature type="binding site" evidence="3">
    <location>
        <position position="182"/>
    </location>
    <ligand>
        <name>Zn(2+)</name>
        <dbReference type="ChEBI" id="CHEBI:29105"/>
        <label>1</label>
    </ligand>
</feature>
<feature type="binding site" evidence="3">
    <location>
        <position position="182"/>
    </location>
    <ligand>
        <name>Zn(2+)</name>
        <dbReference type="ChEBI" id="CHEBI:29105"/>
        <label>2</label>
    </ligand>
</feature>
<feature type="binding site" evidence="3">
    <location>
        <begin position="191"/>
        <end position="193"/>
    </location>
    <ligand>
        <name>substrate</name>
    </ligand>
</feature>
<feature type="binding site" evidence="3">
    <location>
        <begin position="221"/>
        <end position="223"/>
    </location>
    <ligand>
        <name>substrate</name>
    </ligand>
</feature>
<feature type="binding site" evidence="3">
    <location>
        <position position="221"/>
    </location>
    <ligand>
        <name>Zn(2+)</name>
        <dbReference type="ChEBI" id="CHEBI:29105"/>
        <label>2</label>
    </ligand>
</feature>
<feature type="binding site" evidence="3">
    <location>
        <begin position="297"/>
        <end position="300"/>
    </location>
    <ligand>
        <name>substrate</name>
    </ligand>
</feature>
<feature type="modified residue" description="N6-acetyllysine" evidence="1">
    <location>
        <position position="116"/>
    </location>
</feature>
<feature type="modified residue" description="N6-acetyllysine; alternate" evidence="11">
    <location>
        <position position="229"/>
    </location>
</feature>
<feature type="modified residue" description="N6-succinyllysine; alternate" evidence="1">
    <location>
        <position position="229"/>
    </location>
</feature>
<feature type="splice variant" id="VSP_037929" description="In isoform 2." evidence="6">
    <location>
        <begin position="1"/>
        <end position="48"/>
    </location>
</feature>
<feature type="splice variant" id="VSP_055199" description="In isoform 3." evidence="6">
    <original>GSLNVKCLATPCHTSGHICYFVSKPGGSEPPAVFTGDTLFVAGCGKFYEGTADEMCKALLEVLGRLPPDTRVYCGHEYTINNLKFARHVEP</original>
    <variation>TPCLWLAAGSSMKGLRMRCVKLCWRSWAGSPRTQESTVATSTPSTTSSLHATWSPAMPPSGRSWPGPRRSTASGSPQCHPPWQRSLPTTPS</variation>
    <location>
        <begin position="146"/>
        <end position="236"/>
    </location>
</feature>
<feature type="splice variant" id="VSP_055200" description="In isoform 3." evidence="6">
    <location>
        <begin position="237"/>
        <end position="308"/>
    </location>
</feature>
<feature type="sequence conflict" description="In Ref. 1; BAG60445." evidence="8" ref="1">
    <original>D</original>
    <variation>G</variation>
    <location>
        <position position="67"/>
    </location>
</feature>
<feature type="sequence conflict" description="In Ref. 1; BAG61219." evidence="8" ref="1">
    <original>L</original>
    <variation>P</variation>
    <location>
        <position position="121"/>
    </location>
</feature>
<feature type="sequence conflict" description="In Ref. 1; BAF82844." evidence="8" ref="1">
    <original>K</original>
    <variation>E</variation>
    <location>
        <position position="202"/>
    </location>
</feature>
<feature type="strand" evidence="12">
    <location>
        <begin position="50"/>
        <end position="56"/>
    </location>
</feature>
<feature type="turn" evidence="12">
    <location>
        <begin position="57"/>
        <end position="59"/>
    </location>
</feature>
<feature type="strand" evidence="12">
    <location>
        <begin position="60"/>
        <end position="67"/>
    </location>
</feature>
<feature type="turn" evidence="12">
    <location>
        <begin position="68"/>
        <end position="71"/>
    </location>
</feature>
<feature type="strand" evidence="12">
    <location>
        <begin position="72"/>
        <end position="77"/>
    </location>
</feature>
<feature type="helix" evidence="12">
    <location>
        <begin position="81"/>
        <end position="91"/>
    </location>
</feature>
<feature type="strand" evidence="12">
    <location>
        <begin position="94"/>
        <end position="99"/>
    </location>
</feature>
<feature type="helix" evidence="12">
    <location>
        <begin position="105"/>
        <end position="108"/>
    </location>
</feature>
<feature type="helix" evidence="12">
    <location>
        <begin position="111"/>
        <end position="117"/>
    </location>
</feature>
<feature type="strand" evidence="12">
    <location>
        <begin position="122"/>
        <end position="126"/>
    </location>
</feature>
<feature type="strand" evidence="12">
    <location>
        <begin position="134"/>
        <end position="136"/>
    </location>
</feature>
<feature type="strand" evidence="12">
    <location>
        <begin position="142"/>
        <end position="145"/>
    </location>
</feature>
<feature type="strand" evidence="12">
    <location>
        <begin position="148"/>
        <end position="154"/>
    </location>
</feature>
<feature type="strand" evidence="12">
    <location>
        <begin position="157"/>
        <end position="159"/>
    </location>
</feature>
<feature type="strand" evidence="12">
    <location>
        <begin position="163"/>
        <end position="168"/>
    </location>
</feature>
<feature type="strand" evidence="12">
    <location>
        <begin position="170"/>
        <end position="174"/>
    </location>
</feature>
<feature type="strand" evidence="12">
    <location>
        <begin position="177"/>
        <end position="181"/>
    </location>
</feature>
<feature type="helix" evidence="12">
    <location>
        <begin position="197"/>
        <end position="205"/>
    </location>
</feature>
<feature type="turn" evidence="12">
    <location>
        <begin position="206"/>
        <end position="210"/>
    </location>
</feature>
<feature type="strand" evidence="12">
    <location>
        <begin position="216"/>
        <end position="221"/>
    </location>
</feature>
<feature type="helix" evidence="12">
    <location>
        <begin position="224"/>
        <end position="234"/>
    </location>
</feature>
<feature type="helix" evidence="12">
    <location>
        <begin position="239"/>
        <end position="254"/>
    </location>
</feature>
<feature type="helix" evidence="12">
    <location>
        <begin position="263"/>
        <end position="269"/>
    </location>
</feature>
<feature type="turn" evidence="12">
    <location>
        <begin position="271"/>
        <end position="276"/>
    </location>
</feature>
<feature type="helix" evidence="12">
    <location>
        <begin position="278"/>
        <end position="284"/>
    </location>
</feature>
<feature type="helix" evidence="12">
    <location>
        <begin position="289"/>
        <end position="302"/>
    </location>
</feature>
<sequence length="308" mass="33806">MVVGRGLLGRRSLAALGAACARRGLGPALLGVFCHTDLRKNLTVDEGTMKVEVLPALTDNYMYLVIDDETKEAAIVDPVQPQKVVDAARKHGVKLTTVLTTHHHWDHAGGNEKLVKLESGLKVYGGDDRIGALTHKITHLSTLQVGSLNVKCLATPCHTSGHICYFVSKPGGSEPPAVFTGDTLFVAGCGKFYEGTADEMCKALLEVLGRLPPDTRVYCGHEYTINNLKFARHVEPGNAAIREKLAWAKEKYSIGEPTVPSTLAEEFTYNPFMRVREKTVQQHAGETDPVTTMRAVRREKDQFKMPRD</sequence>
<proteinExistence type="evidence at protein level"/>
<keyword id="KW-0002">3D-structure</keyword>
<keyword id="KW-0007">Acetylation</keyword>
<keyword id="KW-0024">Alternative initiation</keyword>
<keyword id="KW-0025">Alternative splicing</keyword>
<keyword id="KW-0963">Cytoplasm</keyword>
<keyword id="KW-0903">Direct protein sequencing</keyword>
<keyword id="KW-0378">Hydrolase</keyword>
<keyword id="KW-0479">Metal-binding</keyword>
<keyword id="KW-0496">Mitochondrion</keyword>
<keyword id="KW-1267">Proteomics identification</keyword>
<keyword id="KW-1185">Reference proteome</keyword>
<keyword id="KW-0809">Transit peptide</keyword>
<keyword id="KW-0862">Zinc</keyword>
<comment type="function">
    <text evidence="5">Thiolesterase that catalyzes the hydrolysis of S-D-lactoyl-glutathione to form glutathione and D-lactic acid.</text>
</comment>
<comment type="catalytic activity">
    <reaction evidence="5">
        <text>an S-(2-hydroxyacyl)glutathione + H2O = a 2-hydroxy carboxylate + glutathione + H(+)</text>
        <dbReference type="Rhea" id="RHEA:21864"/>
        <dbReference type="ChEBI" id="CHEBI:15377"/>
        <dbReference type="ChEBI" id="CHEBI:15378"/>
        <dbReference type="ChEBI" id="CHEBI:57925"/>
        <dbReference type="ChEBI" id="CHEBI:58896"/>
        <dbReference type="ChEBI" id="CHEBI:71261"/>
        <dbReference type="EC" id="3.1.2.6"/>
    </reaction>
    <physiologicalReaction direction="left-to-right" evidence="10">
        <dbReference type="Rhea" id="RHEA:21865"/>
    </physiologicalReaction>
</comment>
<comment type="catalytic activity">
    <reaction evidence="5">
        <text>(R)-S-lactoylglutathione + H2O = (R)-lactate + glutathione + H(+)</text>
        <dbReference type="Rhea" id="RHEA:25245"/>
        <dbReference type="ChEBI" id="CHEBI:15377"/>
        <dbReference type="ChEBI" id="CHEBI:15378"/>
        <dbReference type="ChEBI" id="CHEBI:16004"/>
        <dbReference type="ChEBI" id="CHEBI:57474"/>
        <dbReference type="ChEBI" id="CHEBI:57925"/>
        <dbReference type="EC" id="3.1.2.6"/>
    </reaction>
    <physiologicalReaction direction="left-to-right" evidence="10">
        <dbReference type="Rhea" id="RHEA:25246"/>
    </physiologicalReaction>
</comment>
<comment type="cofactor">
    <cofactor evidence="3">
        <name>Zn(2+)</name>
        <dbReference type="ChEBI" id="CHEBI:29105"/>
    </cofactor>
    <text evidence="3">Binds 2 Zn(2+) ions per subunit.</text>
</comment>
<comment type="biophysicochemical properties">
    <kinetics>
        <KM evidence="5">187 uM for S-D-lactoylglutathione</KM>
        <KM evidence="5">29 uM for S-D-mandeloylglutathione</KM>
    </kinetics>
</comment>
<comment type="pathway">
    <text>Secondary metabolite metabolism; methylglyoxal degradation; (R)-lactate from methylglyoxal: step 2/2.</text>
</comment>
<comment type="subunit">
    <text evidence="3">Monomer.</text>
</comment>
<comment type="interaction">
    <interactant intactId="EBI-3905342">
        <id>Q16775</id>
    </interactant>
    <interactant intactId="EBI-750109">
        <id>Q9NYB0</id>
        <label>TERF2IP</label>
    </interactant>
    <organismsDiffer>false</organismsDiffer>
    <experiments>2</experiments>
</comment>
<comment type="interaction">
    <interactant intactId="EBI-17557678">
        <id>Q16775-2</id>
    </interactant>
    <interactant intactId="EBI-13050366">
        <id>P31941</id>
        <label>APOBEC3A</label>
    </interactant>
    <organismsDiffer>false</organismsDiffer>
    <experiments>3</experiments>
</comment>
<comment type="subcellular location">
    <molecule>Isoform 1</molecule>
    <subcellularLocation>
        <location evidence="4">Mitochondrion matrix</location>
    </subcellularLocation>
</comment>
<comment type="subcellular location">
    <molecule>Isoform 2</molecule>
    <subcellularLocation>
        <location evidence="4">Cytoplasm</location>
    </subcellularLocation>
</comment>
<comment type="alternative products">
    <event type="alternative splicing"/>
    <event type="alternative initiation"/>
    <isoform>
        <id>Q16775-1</id>
        <name>1</name>
        <sequence type="displayed"/>
    </isoform>
    <isoform>
        <id>Q16775-2</id>
        <name>2</name>
        <sequence type="described" ref="VSP_037929"/>
    </isoform>
    <isoform>
        <id>Q16775-3</id>
        <name>3</name>
        <sequence type="described" ref="VSP_055199 VSP_055200"/>
    </isoform>
</comment>
<comment type="tissue specificity">
    <text evidence="4">Expressed in liver and kidney.</text>
</comment>
<comment type="miscellaneous">
    <molecule>Isoform 2</molecule>
    <text evidence="8">Produced by alternative splicing. Also produced by alternative initiation at Met-49 of isoform 1.</text>
</comment>
<comment type="similarity">
    <text evidence="8">Belongs to the metallo-beta-lactamase superfamily. Glyoxalase II family.</text>
</comment>
<comment type="caution">
    <text evidence="9">Only one single gene encoding glyoxalase II has been identified in vertebrates. In yeast and higher plants, separate genes encode the cytosolic and mitochondrial forms of glyoxalase II.</text>
</comment>
<comment type="sequence caution" evidence="8">
    <conflict type="erroneous initiation">
        <sequence resource="EMBL-CDS" id="AAH00840"/>
    </conflict>
    <text>Truncated N-terminus.</text>
</comment>
<comment type="sequence caution" evidence="8">
    <conflict type="erroneous initiation">
        <sequence resource="EMBL-CDS" id="CAA62483"/>
    </conflict>
    <text>Truncated N-terminus.</text>
</comment>
<evidence type="ECO:0000250" key="1">
    <source>
        <dbReference type="UniProtKB" id="Q99KB8"/>
    </source>
</evidence>
<evidence type="ECO:0000255" key="2"/>
<evidence type="ECO:0000269" key="3">
    <source>
    </source>
</evidence>
<evidence type="ECO:0000269" key="4">
    <source>
    </source>
</evidence>
<evidence type="ECO:0000269" key="5">
    <source>
    </source>
</evidence>
<evidence type="ECO:0000303" key="6">
    <source>
    </source>
</evidence>
<evidence type="ECO:0000303" key="7">
    <source>
    </source>
</evidence>
<evidence type="ECO:0000305" key="8"/>
<evidence type="ECO:0000305" key="9">
    <source>
    </source>
</evidence>
<evidence type="ECO:0000305" key="10">
    <source>
    </source>
</evidence>
<evidence type="ECO:0007744" key="11">
    <source>
    </source>
</evidence>
<evidence type="ECO:0007829" key="12">
    <source>
        <dbReference type="PDB" id="1QH5"/>
    </source>
</evidence>
<protein>
    <recommendedName>
        <fullName evidence="7">Hydroxyacylglutathione hydrolase, mitochondrial</fullName>
        <ecNumber evidence="5">3.1.2.6</ecNumber>
    </recommendedName>
    <alternativeName>
        <fullName>Glyoxalase II</fullName>
        <shortName>Glx II</shortName>
    </alternativeName>
</protein>